<keyword id="KW-0002">3D-structure</keyword>
<keyword id="KW-1003">Cell membrane</keyword>
<keyword id="KW-0238">DNA-binding</keyword>
<keyword id="KW-0413">Isomerase</keyword>
<keyword id="KW-0472">Membrane</keyword>
<keyword id="KW-1185">Reference proteome</keyword>
<keyword id="KW-0799">Topoisomerase</keyword>
<feature type="chain" id="PRO_0000145418" description="DNA topoisomerase 4 subunit A">
    <location>
        <begin position="1"/>
        <end position="823"/>
    </location>
</feature>
<feature type="domain" description="Topo IIA-type catalytic" evidence="2">
    <location>
        <begin position="30"/>
        <end position="496"/>
    </location>
</feature>
<feature type="active site" description="O-(5'-phospho-DNA)-tyrosine intermediate" evidence="1 4">
    <location>
        <position position="118"/>
    </location>
</feature>
<feature type="site" description="Interaction with DNA">
    <location>
        <position position="38"/>
    </location>
</feature>
<feature type="site" description="Interaction with DNA">
    <location>
        <position position="74"/>
    </location>
</feature>
<feature type="site" description="Interaction with DNA">
    <location>
        <position position="76"/>
    </location>
</feature>
<feature type="site" description="Interaction with DNA">
    <location>
        <position position="87"/>
    </location>
</feature>
<feature type="site" description="Interaction with DNA">
    <location>
        <position position="93"/>
    </location>
</feature>
<feature type="site" description="Transition state stabilizer">
    <location>
        <position position="117"/>
    </location>
</feature>
<feature type="sequence conflict" description="In Ref. 5; AAB08038." evidence="5" ref="5">
    <original>R</original>
    <variation>C</variation>
    <location>
        <position position="95"/>
    </location>
</feature>
<feature type="sequence conflict" description="In Ref. 1; CAA91551 and 4; CAA65021." evidence="5" ref="1 4">
    <original>I</original>
    <variation>T</variation>
    <location>
        <position position="257"/>
    </location>
</feature>
<feature type="sequence conflict" description="In Ref. 4; CAA65021." evidence="5" ref="4">
    <original>R</original>
    <variation>P</variation>
    <location>
        <position position="362"/>
    </location>
</feature>
<feature type="sequence conflict" description="In Ref. 4; CAA65021." evidence="5" ref="4">
    <original>H</original>
    <variation>R</variation>
    <location>
        <position position="373"/>
    </location>
</feature>
<feature type="sequence conflict" description="In Ref. 4; CAA65021." evidence="5" ref="4">
    <original>A</original>
    <variation>P</variation>
    <location>
        <position position="401"/>
    </location>
</feature>
<feature type="sequence conflict" description="In Ref. 4; CAA65021." evidence="5" ref="4">
    <original>K</original>
    <variation>N</variation>
    <location>
        <position position="473"/>
    </location>
</feature>
<feature type="sequence conflict" description="In Ref. 4; CAA65021." evidence="5" ref="4">
    <original>E</original>
    <variation>A</variation>
    <location>
        <position position="589"/>
    </location>
</feature>
<feature type="sequence conflict" description="In Ref. 4; CAA65021." evidence="5" ref="4">
    <original>V</original>
    <variation>A</variation>
    <location>
        <position position="608"/>
    </location>
</feature>
<feature type="strand" evidence="8">
    <location>
        <begin position="6"/>
        <end position="8"/>
    </location>
</feature>
<feature type="helix" evidence="8">
    <location>
        <begin position="9"/>
        <end position="26"/>
    </location>
</feature>
<feature type="turn" evidence="7">
    <location>
        <begin position="27"/>
        <end position="29"/>
    </location>
</feature>
<feature type="turn" evidence="8">
    <location>
        <begin position="33"/>
        <end position="35"/>
    </location>
</feature>
<feature type="helix" evidence="8">
    <location>
        <begin position="39"/>
        <end position="50"/>
    </location>
</feature>
<feature type="helix" evidence="8">
    <location>
        <begin position="62"/>
        <end position="72"/>
    </location>
</feature>
<feature type="helix" evidence="8">
    <location>
        <begin position="78"/>
        <end position="87"/>
    </location>
</feature>
<feature type="turn" evidence="8">
    <location>
        <begin position="91"/>
        <end position="93"/>
    </location>
</feature>
<feature type="strand" evidence="8">
    <location>
        <begin position="98"/>
        <end position="103"/>
    </location>
</feature>
<feature type="turn" evidence="8">
    <location>
        <begin position="116"/>
        <end position="118"/>
    </location>
</feature>
<feature type="strand" evidence="8">
    <location>
        <begin position="120"/>
        <end position="123"/>
    </location>
</feature>
<feature type="helix" evidence="8">
    <location>
        <begin position="127"/>
        <end position="131"/>
    </location>
</feature>
<feature type="helix" evidence="8">
    <location>
        <begin position="134"/>
        <end position="136"/>
    </location>
</feature>
<feature type="strand" evidence="8">
    <location>
        <begin position="141"/>
        <end position="143"/>
    </location>
</feature>
<feature type="strand" evidence="8">
    <location>
        <begin position="147"/>
        <end position="154"/>
    </location>
</feature>
<feature type="helix" evidence="8">
    <location>
        <begin position="161"/>
        <end position="165"/>
    </location>
</feature>
<feature type="strand" evidence="8">
    <location>
        <begin position="167"/>
        <end position="170"/>
    </location>
</feature>
<feature type="strand" evidence="8">
    <location>
        <begin position="175"/>
        <end position="178"/>
    </location>
</feature>
<feature type="helix" evidence="8">
    <location>
        <begin position="183"/>
        <end position="195"/>
    </location>
</feature>
<feature type="strand" evidence="6">
    <location>
        <begin position="196"/>
        <end position="198"/>
    </location>
</feature>
<feature type="helix" evidence="8">
    <location>
        <begin position="201"/>
        <end position="204"/>
    </location>
</feature>
<feature type="turn" evidence="8">
    <location>
        <begin position="205"/>
        <end position="207"/>
    </location>
</feature>
<feature type="strand" evidence="8">
    <location>
        <begin position="218"/>
        <end position="220"/>
    </location>
</feature>
<feature type="helix" evidence="8">
    <location>
        <begin position="222"/>
        <end position="231"/>
    </location>
</feature>
<feature type="strand" evidence="8">
    <location>
        <begin position="232"/>
        <end position="239"/>
    </location>
</feature>
<feature type="strand" evidence="8">
    <location>
        <begin position="241"/>
        <end position="246"/>
    </location>
</feature>
<feature type="strand" evidence="8">
    <location>
        <begin position="248"/>
        <end position="250"/>
    </location>
</feature>
<feature type="strand" evidence="8">
    <location>
        <begin position="252"/>
        <end position="258"/>
    </location>
</feature>
<feature type="helix" evidence="8">
    <location>
        <begin position="265"/>
        <end position="277"/>
    </location>
</feature>
<feature type="strand" evidence="8">
    <location>
        <begin position="280"/>
        <end position="282"/>
    </location>
</feature>
<feature type="strand" evidence="8">
    <location>
        <begin position="284"/>
        <end position="289"/>
    </location>
</feature>
<feature type="strand" evidence="8">
    <location>
        <begin position="298"/>
        <end position="302"/>
    </location>
</feature>
<feature type="helix" evidence="8">
    <location>
        <begin position="308"/>
        <end position="318"/>
    </location>
</feature>
<feature type="strand" evidence="8">
    <location>
        <begin position="322"/>
        <end position="328"/>
    </location>
</feature>
<feature type="strand" evidence="8">
    <location>
        <begin position="330"/>
        <end position="333"/>
    </location>
</feature>
<feature type="strand" evidence="8">
    <location>
        <begin position="336"/>
        <end position="339"/>
    </location>
</feature>
<feature type="helix" evidence="8">
    <location>
        <begin position="342"/>
        <end position="382"/>
    </location>
</feature>
<feature type="helix" evidence="8">
    <location>
        <begin position="385"/>
        <end position="394"/>
    </location>
</feature>
<feature type="strand" evidence="8">
    <location>
        <begin position="395"/>
        <end position="397"/>
    </location>
</feature>
<feature type="helix" evidence="8">
    <location>
        <begin position="398"/>
        <end position="409"/>
    </location>
</feature>
<feature type="helix" evidence="8">
    <location>
        <begin position="413"/>
        <end position="420"/>
    </location>
</feature>
<feature type="helix" evidence="8">
    <location>
        <begin position="424"/>
        <end position="428"/>
    </location>
</feature>
<feature type="helix" evidence="8">
    <location>
        <begin position="432"/>
        <end position="454"/>
    </location>
</feature>
<feature type="helix" evidence="8">
    <location>
        <begin position="456"/>
        <end position="474"/>
    </location>
</feature>
<feature type="strand" evidence="8">
    <location>
        <begin position="480"/>
        <end position="484"/>
    </location>
</feature>
<comment type="function">
    <text evidence="1 3 4">Topoisomerase IV is essential for chromosome segregation. It relaxes supercoiled DNA (PubMed:17375187, PubMed:20596531). Performs the decatenation events required during the replication of a circular DNA molecule.</text>
</comment>
<comment type="catalytic activity">
    <reaction evidence="1 3 4">
        <text>ATP-dependent breakage, passage and rejoining of double-stranded DNA.</text>
        <dbReference type="EC" id="5.6.2.2"/>
    </reaction>
</comment>
<comment type="activity regulation">
    <text evidence="4">Inhibited by quinolones, such as levofloxacin (PubMed:20596531).</text>
</comment>
<comment type="subunit">
    <text evidence="1 3 4">Heterotetramer composed of ParC and ParE (PubMed:17375187, PubMed:20596531).</text>
</comment>
<comment type="subcellular location">
    <subcellularLocation>
        <location evidence="1">Cell membrane</location>
        <topology evidence="1">Peripheral membrane protein</topology>
    </subcellularLocation>
</comment>
<comment type="similarity">
    <text evidence="1">Belongs to the type II topoisomerase GyrA/ParC subunit family. ParC type 2 subfamily.</text>
</comment>
<gene>
    <name evidence="1" type="primary">parC</name>
    <name type="ordered locus">SP_0855</name>
</gene>
<evidence type="ECO:0000255" key="1">
    <source>
        <dbReference type="HAMAP-Rule" id="MF_00937"/>
    </source>
</evidence>
<evidence type="ECO:0000255" key="2">
    <source>
        <dbReference type="PROSITE-ProRule" id="PRU01384"/>
    </source>
</evidence>
<evidence type="ECO:0000269" key="3">
    <source>
    </source>
</evidence>
<evidence type="ECO:0000269" key="4">
    <source>
    </source>
</evidence>
<evidence type="ECO:0000305" key="5"/>
<evidence type="ECO:0007829" key="6">
    <source>
        <dbReference type="PDB" id="3KSB"/>
    </source>
</evidence>
<evidence type="ECO:0007829" key="7">
    <source>
        <dbReference type="PDB" id="3RAF"/>
    </source>
</evidence>
<evidence type="ECO:0007829" key="8">
    <source>
        <dbReference type="PDB" id="8C41"/>
    </source>
</evidence>
<protein>
    <recommendedName>
        <fullName evidence="1">DNA topoisomerase 4 subunit A</fullName>
        <ecNumber evidence="1">5.6.2.2</ecNumber>
    </recommendedName>
    <alternativeName>
        <fullName evidence="1">Topoisomerase IV subunit A</fullName>
    </alternativeName>
</protein>
<reference key="1">
    <citation type="journal article" date="1996" name="J. Bacteriol.">
        <title>Cloning and characterization of the parC and parE genes of Streptococcus pneumoniae encoding DNA topoisomerase IV: role in fluoroquinolone resistance.</title>
        <authorList>
            <person name="Pan X."/>
            <person name="Fisher M."/>
        </authorList>
    </citation>
    <scope>NUCLEOTIDE SEQUENCE [GENOMIC DNA]</scope>
    <source>
        <strain>7785</strain>
    </source>
</reference>
<reference key="2">
    <citation type="submission" date="2000-01" db="EMBL/GenBank/DDBJ databases">
        <authorList>
            <person name="Pan X."/>
        </authorList>
    </citation>
    <scope>SEQUENCE REVISION TO 636-643</scope>
</reference>
<reference key="3">
    <citation type="journal article" date="2001" name="Science">
        <title>Complete genome sequence of a virulent isolate of Streptococcus pneumoniae.</title>
        <authorList>
            <person name="Tettelin H."/>
            <person name="Nelson K.E."/>
            <person name="Paulsen I.T."/>
            <person name="Eisen J.A."/>
            <person name="Read T.D."/>
            <person name="Peterson S.N."/>
            <person name="Heidelberg J.F."/>
            <person name="DeBoy R.T."/>
            <person name="Haft D.H."/>
            <person name="Dodson R.J."/>
            <person name="Durkin A.S."/>
            <person name="Gwinn M.L."/>
            <person name="Kolonay J.F."/>
            <person name="Nelson W.C."/>
            <person name="Peterson J.D."/>
            <person name="Umayam L.A."/>
            <person name="White O."/>
            <person name="Salzberg S.L."/>
            <person name="Lewis M.R."/>
            <person name="Radune D."/>
            <person name="Holtzapple E.K."/>
            <person name="Khouri H.M."/>
            <person name="Wolf A.M."/>
            <person name="Utterback T.R."/>
            <person name="Hansen C.L."/>
            <person name="McDonald L.A."/>
            <person name="Feldblyum T.V."/>
            <person name="Angiuoli S.V."/>
            <person name="Dickinson T."/>
            <person name="Hickey E.K."/>
            <person name="Holt I.E."/>
            <person name="Loftus B.J."/>
            <person name="Yang F."/>
            <person name="Smith H.O."/>
            <person name="Venter J.C."/>
            <person name="Dougherty B.A."/>
            <person name="Morrison D.A."/>
            <person name="Hollingshead S.K."/>
            <person name="Fraser C.M."/>
        </authorList>
    </citation>
    <scope>NUCLEOTIDE SEQUENCE [LARGE SCALE GENOMIC DNA]</scope>
    <source>
        <strain>ATCC BAA-334 / TIGR4</strain>
    </source>
</reference>
<reference key="4">
    <citation type="journal article" date="1996" name="Antimicrob. Agents Chemother.">
        <title>ParC subunit of DNA topoisomerase IV of Streptococcus pneumoniae is a primary target of fluoroquinolones and cooperates with DNA gyrase A subunit in forming resistance phenotype.</title>
        <authorList>
            <person name="Munoz R."/>
            <person name="de la Campa A.G."/>
        </authorList>
    </citation>
    <scope>NUCLEOTIDE SEQUENCE [GENOMIC DNA] OF 1-620</scope>
    <source>
        <strain>D39 / NCTC 7466 / Serotype 2</strain>
    </source>
</reference>
<reference key="5">
    <citation type="journal article" date="1996" name="Antimicrob. Agents Chemother.">
        <title>Contribution of mutations in gyrA and parC genes to fluoroquinolone resistance of mutants of Streptococcus pneumoniae obtained in vivo and in vitro.</title>
        <authorList>
            <person name="Tankovic J."/>
            <person name="Perichon B."/>
            <person name="Duval J."/>
            <person name="Courvalin P."/>
        </authorList>
    </citation>
    <scope>NUCLEOTIDE SEQUENCE [GENOMIC DNA] OF 38-106</scope>
    <source>
        <strain>BM4203</strain>
    </source>
</reference>
<reference key="6">
    <citation type="journal article" date="2007" name="PLoS ONE">
        <title>Breakage-reunion domain of Streptococcus pneumoniae topoisomerase IV: crystal structure of a gram-positive quinolone target.</title>
        <authorList>
            <person name="Laponogov I."/>
            <person name="Veselkov D.A."/>
            <person name="Sohi M.K."/>
            <person name="Pan X.S."/>
            <person name="Achari A."/>
            <person name="Yang C."/>
            <person name="Ferrara J.D."/>
            <person name="Fisher L.M."/>
            <person name="Sanderson M.R."/>
        </authorList>
    </citation>
    <scope>X-RAY CRYSTALLOGRAPHY (2.67 ANGSTROMS) OF 1-488</scope>
    <scope>FUNCTION</scope>
    <scope>CATALYTIC ACTIVITY</scope>
    <scope>SUBUNIT</scope>
</reference>
<reference key="7">
    <citation type="journal article" date="2009" name="Nat. Struct. Mol. Biol.">
        <title>Structural insight into the quinolone-DNA cleavage complex of type IIA topoisomerases.</title>
        <authorList>
            <person name="Laponogov I."/>
            <person name="Sohi M.K."/>
            <person name="Veselkov D.A."/>
            <person name="Pan X.S."/>
            <person name="Sawhney R."/>
            <person name="Thompson A.W."/>
            <person name="McAuley K.E."/>
            <person name="Fisher L.M."/>
            <person name="Sanderson M.R."/>
        </authorList>
    </citation>
    <scope>X-RAY CRYSTALLOGRAPHY (4.0 ANGSTROMS) OF 1-488</scope>
</reference>
<reference key="8">
    <citation type="journal article" date="2010" name="PLoS ONE">
        <title>Structural basis of gate-DNA breakage and resealing by type II topoisomerases.</title>
        <authorList>
            <person name="Laponogov I."/>
            <person name="Pan X.S."/>
            <person name="Veselkov D.A."/>
            <person name="McAuley K.E."/>
            <person name="Fisher L.M."/>
            <person name="Sanderson M.R."/>
        </authorList>
    </citation>
    <scope>X-RAY CRYSTALLOGRAPHY (2.9 ANGSTROMS) OF 1-488 IN COMPLEX WITH PARE; LEVOFLOXACIN AND DNA</scope>
    <scope>CATALYTIC ACTIVITY</scope>
    <scope>FUNCTION</scope>
    <scope>ACTIVE SITE</scope>
    <scope>ACTIVITY REGULATION</scope>
    <scope>SUBUNIT</scope>
</reference>
<name>PARC_STRPN</name>
<sequence length="823" mass="93133">MSNIQNMSLEDIMGERFGRYSKYIIQDRALPDIRDGLKPVQRRILYSMNKDSNTFDKSYRKSAKSVGNIMGNFHPHGDSSIYDAMVRMSQNWKNREILVEMHGNNGSMDGDPPAAMRYTEARLSEIAGYLLQDIEKKTVPFAWNFDDTEKEPTVLPAAFPNLLVNGSTGISAGYATDIPPHNLAEVIDAAVYMIDHPTAKIDKLMEFLPGPDFPTGAIIQGRDEIKKAYETGKGRVVVRSKTEIEKLKGGKEQIVIIEIPYEINKANLVKKIDDVRVNNKVAGIAEVRDESDRDGLRIAIELKKDANTELVLNYLFKYTDLQINYNFNMVAIDNFTPRQVGIVPILSSYIAHRREVILARSRFDKEKAEKRLHIVEGLIRVISILDEVIALIRASENKADAKENLKVSYDFTEEQAEAIVTLQLYRLTNTDVVVLQEEEAELREKIAMLAAIIGDERTMYNLMKKELREVKKKFATPRLSSLEDTAKAIEIDTASLIAEEDTYVSVTKAGYIKRTSPRSFAASTLEEIGKRDDDRLIFVQSAKTTQHLLMFTSLGNVIYRPIHELADIRWKDIGEHLSQTITNFETNEEILYVEVLDQFDDATTYFAVTRLGQIKRVERKEFTPWRTYRSKSVKYAKLKDDTDQIVAVAPIKLDDVVLVSQNGYALRFNIEEVPVVGAKAAGVKAMNLKEDDVLQSGFICNTSSFYLLTQRGSLKRVSIEEILATSRAKRGLQVLRELKNKPHRVFLAGAVAEQGFVGDFFSTEVDVNDQTLLVQSNKGTIYESRLQDLNLSERTSNGSFISDTISDEEVFDAYLQEVVTEDK</sequence>
<dbReference type="EC" id="5.6.2.2" evidence="1"/>
<dbReference type="EMBL" id="Z67739">
    <property type="protein sequence ID" value="CAA91551.2"/>
    <property type="molecule type" value="Genomic_DNA"/>
</dbReference>
<dbReference type="EMBL" id="AE005672">
    <property type="protein sequence ID" value="AAK74984.1"/>
    <property type="molecule type" value="Genomic_DNA"/>
</dbReference>
<dbReference type="EMBL" id="X95717">
    <property type="protein sequence ID" value="CAA65021.1"/>
    <property type="molecule type" value="Genomic_DNA"/>
</dbReference>
<dbReference type="EMBL" id="U49088">
    <property type="protein sequence ID" value="AAB08038.1"/>
    <property type="molecule type" value="Genomic_DNA"/>
</dbReference>
<dbReference type="PIR" id="G95098">
    <property type="entry name" value="G95098"/>
</dbReference>
<dbReference type="RefSeq" id="WP_010963255.1">
    <property type="nucleotide sequence ID" value="NC_003028.3"/>
</dbReference>
<dbReference type="PDB" id="2NOV">
    <property type="method" value="X-ray"/>
    <property type="resolution" value="2.67 A"/>
    <property type="chains" value="A/B/C/D=1-488"/>
</dbReference>
<dbReference type="PDB" id="3FOE">
    <property type="method" value="X-ray"/>
    <property type="resolution" value="4.00 A"/>
    <property type="chains" value="A/B=1-488"/>
</dbReference>
<dbReference type="PDB" id="3FOF">
    <property type="method" value="X-ray"/>
    <property type="resolution" value="4.00 A"/>
    <property type="chains" value="A/B=1-488"/>
</dbReference>
<dbReference type="PDB" id="3K9F">
    <property type="method" value="X-ray"/>
    <property type="resolution" value="2.90 A"/>
    <property type="chains" value="A/B=1-488"/>
</dbReference>
<dbReference type="PDB" id="3KSA">
    <property type="method" value="X-ray"/>
    <property type="resolution" value="3.30 A"/>
    <property type="chains" value="A/B=1-488"/>
</dbReference>
<dbReference type="PDB" id="3KSB">
    <property type="method" value="X-ray"/>
    <property type="resolution" value="3.50 A"/>
    <property type="chains" value="A/B=1-488"/>
</dbReference>
<dbReference type="PDB" id="3LTN">
    <property type="method" value="X-ray"/>
    <property type="resolution" value="3.10 A"/>
    <property type="chains" value="A/B=1-488"/>
</dbReference>
<dbReference type="PDB" id="3RAD">
    <property type="method" value="X-ray"/>
    <property type="resolution" value="3.35 A"/>
    <property type="chains" value="A/B=1-488"/>
</dbReference>
<dbReference type="PDB" id="3RAE">
    <property type="method" value="X-ray"/>
    <property type="resolution" value="2.90 A"/>
    <property type="chains" value="A/B=1-488"/>
</dbReference>
<dbReference type="PDB" id="3RAF">
    <property type="method" value="X-ray"/>
    <property type="resolution" value="3.24 A"/>
    <property type="chains" value="A/B=1-488"/>
</dbReference>
<dbReference type="PDB" id="4I3H">
    <property type="method" value="X-ray"/>
    <property type="resolution" value="3.70 A"/>
    <property type="chains" value="A/B=1-490"/>
</dbReference>
<dbReference type="PDB" id="4JUO">
    <property type="method" value="X-ray"/>
    <property type="resolution" value="6.53 A"/>
    <property type="chains" value="A=1-488"/>
</dbReference>
<dbReference type="PDB" id="4KOE">
    <property type="method" value="X-ray"/>
    <property type="resolution" value="3.02 A"/>
    <property type="chains" value="A/B=1-488"/>
</dbReference>
<dbReference type="PDB" id="4KPE">
    <property type="method" value="X-ray"/>
    <property type="resolution" value="3.43 A"/>
    <property type="chains" value="A/B=1-488"/>
</dbReference>
<dbReference type="PDB" id="4KPF">
    <property type="method" value="X-ray"/>
    <property type="resolution" value="3.24 A"/>
    <property type="chains" value="A/B=1-488"/>
</dbReference>
<dbReference type="PDB" id="4Z3O">
    <property type="method" value="X-ray"/>
    <property type="resolution" value="3.44 A"/>
    <property type="chains" value="A/B=3-484"/>
</dbReference>
<dbReference type="PDB" id="4Z4Q">
    <property type="method" value="X-ray"/>
    <property type="resolution" value="3.04 A"/>
    <property type="chains" value="A/B=3-484"/>
</dbReference>
<dbReference type="PDB" id="4Z53">
    <property type="method" value="X-ray"/>
    <property type="resolution" value="3.26 A"/>
    <property type="chains" value="A/B=3-484"/>
</dbReference>
<dbReference type="PDB" id="8C41">
    <property type="method" value="X-ray"/>
    <property type="resolution" value="2.39 A"/>
    <property type="chains" value="A/B=1-490"/>
</dbReference>
<dbReference type="PDB" id="8QMB">
    <property type="method" value="X-ray"/>
    <property type="resolution" value="2.00 A"/>
    <property type="chains" value="A/B=1-488"/>
</dbReference>
<dbReference type="PDB" id="8QMC">
    <property type="method" value="X-ray"/>
    <property type="resolution" value="2.40 A"/>
    <property type="chains" value="A/B=1-488"/>
</dbReference>
<dbReference type="PDB" id="9GEF">
    <property type="method" value="X-ray"/>
    <property type="resolution" value="2.62 A"/>
    <property type="chains" value="A/B=1-485"/>
</dbReference>
<dbReference type="PDBsum" id="2NOV"/>
<dbReference type="PDBsum" id="3FOE"/>
<dbReference type="PDBsum" id="3FOF"/>
<dbReference type="PDBsum" id="3K9F"/>
<dbReference type="PDBsum" id="3KSA"/>
<dbReference type="PDBsum" id="3KSB"/>
<dbReference type="PDBsum" id="3LTN"/>
<dbReference type="PDBsum" id="3RAD"/>
<dbReference type="PDBsum" id="3RAE"/>
<dbReference type="PDBsum" id="3RAF"/>
<dbReference type="PDBsum" id="4I3H"/>
<dbReference type="PDBsum" id="4JUO"/>
<dbReference type="PDBsum" id="4KOE"/>
<dbReference type="PDBsum" id="4KPE"/>
<dbReference type="PDBsum" id="4KPF"/>
<dbReference type="PDBsum" id="4Z3O"/>
<dbReference type="PDBsum" id="4Z4Q"/>
<dbReference type="PDBsum" id="4Z53"/>
<dbReference type="PDBsum" id="8C41"/>
<dbReference type="PDBsum" id="8QMB"/>
<dbReference type="PDBsum" id="8QMC"/>
<dbReference type="PDBsum" id="9GEF"/>
<dbReference type="SMR" id="P72525"/>
<dbReference type="DIP" id="DIP-48521N"/>
<dbReference type="IntAct" id="P72525">
    <property type="interactions" value="1"/>
</dbReference>
<dbReference type="ChEMBL" id="CHEMBL2363033"/>
<dbReference type="DrugBank" id="DB06771">
    <property type="generic name" value="Besifloxacin"/>
</dbReference>
<dbReference type="DrugBank" id="DB01044">
    <property type="generic name" value="Gatifloxacin"/>
</dbReference>
<dbReference type="DrugCentral" id="P72525"/>
<dbReference type="PaxDb" id="170187-SP_0855"/>
<dbReference type="EnsemblBacteria" id="AAK74984">
    <property type="protein sequence ID" value="AAK74984"/>
    <property type="gene ID" value="SP_0855"/>
</dbReference>
<dbReference type="KEGG" id="spn:SP_0855"/>
<dbReference type="eggNOG" id="COG0188">
    <property type="taxonomic scope" value="Bacteria"/>
</dbReference>
<dbReference type="PhylomeDB" id="P72525"/>
<dbReference type="BioCyc" id="SPNE170187:G1FZB-873-MONOMER"/>
<dbReference type="EvolutionaryTrace" id="P72525"/>
<dbReference type="PRO" id="PR:P72525"/>
<dbReference type="Proteomes" id="UP000000585">
    <property type="component" value="Chromosome"/>
</dbReference>
<dbReference type="GO" id="GO:0005694">
    <property type="term" value="C:chromosome"/>
    <property type="evidence" value="ECO:0007669"/>
    <property type="project" value="InterPro"/>
</dbReference>
<dbReference type="GO" id="GO:0005737">
    <property type="term" value="C:cytoplasm"/>
    <property type="evidence" value="ECO:0007669"/>
    <property type="project" value="TreeGrafter"/>
</dbReference>
<dbReference type="GO" id="GO:0009330">
    <property type="term" value="C:DNA topoisomerase type II (double strand cut, ATP-hydrolyzing) complex"/>
    <property type="evidence" value="ECO:0007669"/>
    <property type="project" value="TreeGrafter"/>
</dbReference>
<dbReference type="GO" id="GO:0019897">
    <property type="term" value="C:extrinsic component of plasma membrane"/>
    <property type="evidence" value="ECO:0007669"/>
    <property type="project" value="UniProtKB-UniRule"/>
</dbReference>
<dbReference type="GO" id="GO:0005524">
    <property type="term" value="F:ATP binding"/>
    <property type="evidence" value="ECO:0007669"/>
    <property type="project" value="InterPro"/>
</dbReference>
<dbReference type="GO" id="GO:0003677">
    <property type="term" value="F:DNA binding"/>
    <property type="evidence" value="ECO:0007669"/>
    <property type="project" value="UniProtKB-UniRule"/>
</dbReference>
<dbReference type="GO" id="GO:0034335">
    <property type="term" value="F:DNA negative supercoiling activity"/>
    <property type="evidence" value="ECO:0007669"/>
    <property type="project" value="UniProtKB-ARBA"/>
</dbReference>
<dbReference type="GO" id="GO:0007059">
    <property type="term" value="P:chromosome segregation"/>
    <property type="evidence" value="ECO:0007669"/>
    <property type="project" value="UniProtKB-UniRule"/>
</dbReference>
<dbReference type="GO" id="GO:0006265">
    <property type="term" value="P:DNA topological change"/>
    <property type="evidence" value="ECO:0007669"/>
    <property type="project" value="UniProtKB-UniRule"/>
</dbReference>
<dbReference type="CDD" id="cd00187">
    <property type="entry name" value="TOP4c"/>
    <property type="match status" value="1"/>
</dbReference>
<dbReference type="FunFam" id="1.10.268.10:FF:000001">
    <property type="entry name" value="DNA gyrase subunit A"/>
    <property type="match status" value="1"/>
</dbReference>
<dbReference type="FunFam" id="3.30.1360.40:FF:000002">
    <property type="entry name" value="DNA gyrase subunit A"/>
    <property type="match status" value="1"/>
</dbReference>
<dbReference type="FunFam" id="3.90.199.10:FF:000001">
    <property type="entry name" value="DNA gyrase subunit A"/>
    <property type="match status" value="1"/>
</dbReference>
<dbReference type="FunFam" id="2.120.10.90:FF:000005">
    <property type="entry name" value="DNA topoisomerase 4 subunit A"/>
    <property type="match status" value="1"/>
</dbReference>
<dbReference type="Gene3D" id="3.30.1360.40">
    <property type="match status" value="1"/>
</dbReference>
<dbReference type="Gene3D" id="2.120.10.90">
    <property type="entry name" value="DNA gyrase/topoisomerase IV, subunit A, C-terminal"/>
    <property type="match status" value="1"/>
</dbReference>
<dbReference type="Gene3D" id="3.90.199.10">
    <property type="entry name" value="Topoisomerase II, domain 5"/>
    <property type="match status" value="1"/>
</dbReference>
<dbReference type="Gene3D" id="1.10.268.10">
    <property type="entry name" value="Topoisomerase, domain 3"/>
    <property type="match status" value="1"/>
</dbReference>
<dbReference type="HAMAP" id="MF_00937">
    <property type="entry name" value="ParC_type2"/>
    <property type="match status" value="1"/>
</dbReference>
<dbReference type="InterPro" id="IPR006691">
    <property type="entry name" value="GyrA/parC_rep"/>
</dbReference>
<dbReference type="InterPro" id="IPR035516">
    <property type="entry name" value="Gyrase/topoIV_suA_C"/>
</dbReference>
<dbReference type="InterPro" id="IPR013760">
    <property type="entry name" value="Topo_IIA-like_dom_sf"/>
</dbReference>
<dbReference type="InterPro" id="IPR013758">
    <property type="entry name" value="Topo_IIA_A/C_ab"/>
</dbReference>
<dbReference type="InterPro" id="IPR013757">
    <property type="entry name" value="Topo_IIA_A_a_sf"/>
</dbReference>
<dbReference type="InterPro" id="IPR002205">
    <property type="entry name" value="Topo_IIA_dom_A"/>
</dbReference>
<dbReference type="InterPro" id="IPR005741">
    <property type="entry name" value="TopoIV_A_Gpos"/>
</dbReference>
<dbReference type="InterPro" id="IPR050220">
    <property type="entry name" value="Type_II_DNA_Topoisomerases"/>
</dbReference>
<dbReference type="NCBIfam" id="TIGR01061">
    <property type="entry name" value="parC_Gpos"/>
    <property type="match status" value="1"/>
</dbReference>
<dbReference type="NCBIfam" id="NF004044">
    <property type="entry name" value="PRK05561.1"/>
    <property type="match status" value="1"/>
</dbReference>
<dbReference type="PANTHER" id="PTHR43493">
    <property type="entry name" value="DNA GYRASE/TOPOISOMERASE SUBUNIT A"/>
    <property type="match status" value="1"/>
</dbReference>
<dbReference type="PANTHER" id="PTHR43493:SF9">
    <property type="entry name" value="DNA TOPOISOMERASE 4 SUBUNIT A"/>
    <property type="match status" value="1"/>
</dbReference>
<dbReference type="Pfam" id="PF03989">
    <property type="entry name" value="DNA_gyraseA_C"/>
    <property type="match status" value="5"/>
</dbReference>
<dbReference type="Pfam" id="PF00521">
    <property type="entry name" value="DNA_topoisoIV"/>
    <property type="match status" value="1"/>
</dbReference>
<dbReference type="SMART" id="SM00434">
    <property type="entry name" value="TOP4c"/>
    <property type="match status" value="1"/>
</dbReference>
<dbReference type="SUPFAM" id="SSF101904">
    <property type="entry name" value="GyrA/ParC C-terminal domain-like"/>
    <property type="match status" value="1"/>
</dbReference>
<dbReference type="SUPFAM" id="SSF56719">
    <property type="entry name" value="Type II DNA topoisomerase"/>
    <property type="match status" value="1"/>
</dbReference>
<dbReference type="PROSITE" id="PS52040">
    <property type="entry name" value="TOPO_IIA"/>
    <property type="match status" value="1"/>
</dbReference>
<accession>P72525</accession>
<accession>P72537</accession>
<accession>Q54917</accession>
<proteinExistence type="evidence at protein level"/>
<organism>
    <name type="scientific">Streptococcus pneumoniae serotype 4 (strain ATCC BAA-334 / TIGR4)</name>
    <dbReference type="NCBI Taxonomy" id="170187"/>
    <lineage>
        <taxon>Bacteria</taxon>
        <taxon>Bacillati</taxon>
        <taxon>Bacillota</taxon>
        <taxon>Bacilli</taxon>
        <taxon>Lactobacillales</taxon>
        <taxon>Streptococcaceae</taxon>
        <taxon>Streptococcus</taxon>
    </lineage>
</organism>